<name>MRGX2_RHIBE</name>
<evidence type="ECO:0000250" key="1">
    <source>
        <dbReference type="UniProtKB" id="Q3KNA1"/>
    </source>
</evidence>
<evidence type="ECO:0000255" key="2"/>
<evidence type="ECO:0000255" key="3">
    <source>
        <dbReference type="PROSITE-ProRule" id="PRU00521"/>
    </source>
</evidence>
<keyword id="KW-1003">Cell membrane</keyword>
<keyword id="KW-0297">G-protein coupled receptor</keyword>
<keyword id="KW-0472">Membrane</keyword>
<keyword id="KW-0675">Receptor</keyword>
<keyword id="KW-1185">Reference proteome</keyword>
<keyword id="KW-0807">Transducer</keyword>
<keyword id="KW-0812">Transmembrane</keyword>
<keyword id="KW-1133">Transmembrane helix</keyword>
<dbReference type="EMBL" id="AY651166">
    <property type="protein sequence ID" value="AAW70079.1"/>
    <property type="molecule type" value="Genomic_DNA"/>
</dbReference>
<dbReference type="SMR" id="Q4QXU2"/>
<dbReference type="Proteomes" id="UP000233180">
    <property type="component" value="Unplaced"/>
</dbReference>
<dbReference type="GO" id="GO:0005886">
    <property type="term" value="C:plasma membrane"/>
    <property type="evidence" value="ECO:0007669"/>
    <property type="project" value="UniProtKB-SubCell"/>
</dbReference>
<dbReference type="GO" id="GO:0004930">
    <property type="term" value="F:G protein-coupled receptor activity"/>
    <property type="evidence" value="ECO:0000250"/>
    <property type="project" value="UniProtKB"/>
</dbReference>
<dbReference type="GO" id="GO:1990595">
    <property type="term" value="F:mast cell secretagogue receptor activity"/>
    <property type="evidence" value="ECO:0000250"/>
    <property type="project" value="UniProtKB"/>
</dbReference>
<dbReference type="GO" id="GO:0045576">
    <property type="term" value="P:mast cell activation"/>
    <property type="evidence" value="ECO:0000250"/>
    <property type="project" value="UniProtKB"/>
</dbReference>
<dbReference type="GO" id="GO:0043303">
    <property type="term" value="P:mast cell degranulation"/>
    <property type="evidence" value="ECO:0000250"/>
    <property type="project" value="UniProtKB"/>
</dbReference>
<dbReference type="CDD" id="cd15106">
    <property type="entry name" value="7tmA_MrgprX-like"/>
    <property type="match status" value="1"/>
</dbReference>
<dbReference type="FunFam" id="1.20.1070.10:FF:000140">
    <property type="entry name" value="Mas-related G-protein coupled receptor member X2"/>
    <property type="match status" value="1"/>
</dbReference>
<dbReference type="Gene3D" id="1.20.1070.10">
    <property type="entry name" value="Rhodopsin 7-helix transmembrane proteins"/>
    <property type="match status" value="1"/>
</dbReference>
<dbReference type="InterPro" id="IPR000276">
    <property type="entry name" value="GPCR_Rhodpsn"/>
</dbReference>
<dbReference type="InterPro" id="IPR017452">
    <property type="entry name" value="GPCR_Rhodpsn_7TM"/>
</dbReference>
<dbReference type="InterPro" id="IPR026234">
    <property type="entry name" value="MRGPCRFAMILY"/>
</dbReference>
<dbReference type="PANTHER" id="PTHR11334">
    <property type="entry name" value="MAS-RELATED G-PROTEIN COUPLED RECEPTOR"/>
    <property type="match status" value="1"/>
</dbReference>
<dbReference type="PANTHER" id="PTHR11334:SF29">
    <property type="entry name" value="MAS-RELATED G-PROTEIN COUPLED RECEPTOR MEMBER X2"/>
    <property type="match status" value="1"/>
</dbReference>
<dbReference type="Pfam" id="PF00001">
    <property type="entry name" value="7tm_1"/>
    <property type="match status" value="1"/>
</dbReference>
<dbReference type="PRINTS" id="PR00237">
    <property type="entry name" value="GPCRRHODOPSN"/>
</dbReference>
<dbReference type="PRINTS" id="PR02108">
    <property type="entry name" value="MRGPCRFAMILY"/>
</dbReference>
<dbReference type="SUPFAM" id="SSF81321">
    <property type="entry name" value="Family A G protein-coupled receptor-like"/>
    <property type="match status" value="1"/>
</dbReference>
<dbReference type="PROSITE" id="PS00237">
    <property type="entry name" value="G_PROTEIN_RECEP_F1_1"/>
    <property type="match status" value="1"/>
</dbReference>
<dbReference type="PROSITE" id="PS50262">
    <property type="entry name" value="G_PROTEIN_RECEP_F1_2"/>
    <property type="match status" value="1"/>
</dbReference>
<proteinExistence type="inferred from homology"/>
<organism>
    <name type="scientific">Rhinopithecus bieti</name>
    <name type="common">Black snub-nosed monkey</name>
    <name type="synonym">Pygathrix bieti</name>
    <dbReference type="NCBI Taxonomy" id="61621"/>
    <lineage>
        <taxon>Eukaryota</taxon>
        <taxon>Metazoa</taxon>
        <taxon>Chordata</taxon>
        <taxon>Craniata</taxon>
        <taxon>Vertebrata</taxon>
        <taxon>Euteleostomi</taxon>
        <taxon>Mammalia</taxon>
        <taxon>Eutheria</taxon>
        <taxon>Euarchontoglires</taxon>
        <taxon>Primates</taxon>
        <taxon>Haplorrhini</taxon>
        <taxon>Catarrhini</taxon>
        <taxon>Cercopithecidae</taxon>
        <taxon>Colobinae</taxon>
        <taxon>Rhinopithecus</taxon>
    </lineage>
</organism>
<sequence>MDPTTPAWGTESTTMNGNDQALPLLCGKETLILVLLILFIALVGLVGNAFVLWLLGFRMRRNAFSVYVLSLAGADFLFLCFPMINCLEYLINFFHSISINFPSFFTTVMTCAYLAGLSMLSAISTERCLSVLWPIWYRCRRPRHLSAVLCVLLWALSLLLSILEGKFCGLLFSDGDSGWCQTFDFITAAWLMFLFVVLCGSSLALLVRILCGSQGLPLTRLYLTILLTVLIFLLCGLPFGIQWFLILWIWKNSDVLFCHIHPVSVVLSSFNSSANPIIYFFVGSFRKQWRLRQPVLKLALQRALQDTAEVDHSEGCFSQGTLEMSGSSLV</sequence>
<feature type="chain" id="PRO_0000069780" description="Mas-related G-protein coupled receptor member X2">
    <location>
        <begin position="1"/>
        <end position="330"/>
    </location>
</feature>
<feature type="topological domain" description="Extracellular" evidence="2">
    <location>
        <begin position="1"/>
        <end position="33"/>
    </location>
</feature>
<feature type="transmembrane region" description="Helical; Name=1" evidence="2">
    <location>
        <begin position="34"/>
        <end position="54"/>
    </location>
</feature>
<feature type="topological domain" description="Cytoplasmic" evidence="2">
    <location>
        <begin position="55"/>
        <end position="63"/>
    </location>
</feature>
<feature type="transmembrane region" description="Helical; Name=2" evidence="2">
    <location>
        <begin position="64"/>
        <end position="84"/>
    </location>
</feature>
<feature type="topological domain" description="Extracellular" evidence="2">
    <location>
        <begin position="85"/>
        <end position="96"/>
    </location>
</feature>
<feature type="transmembrane region" description="Helical; Name=3" evidence="2">
    <location>
        <begin position="97"/>
        <end position="117"/>
    </location>
</feature>
<feature type="topological domain" description="Cytoplasmic" evidence="2">
    <location>
        <begin position="118"/>
        <end position="144"/>
    </location>
</feature>
<feature type="transmembrane region" description="Helical; Name=4" evidence="2">
    <location>
        <begin position="145"/>
        <end position="165"/>
    </location>
</feature>
<feature type="topological domain" description="Extracellular" evidence="2">
    <location>
        <begin position="166"/>
        <end position="184"/>
    </location>
</feature>
<feature type="transmembrane region" description="Helical; Name=5" evidence="2">
    <location>
        <begin position="185"/>
        <end position="205"/>
    </location>
</feature>
<feature type="topological domain" description="Cytoplasmic" evidence="2">
    <location>
        <begin position="206"/>
        <end position="228"/>
    </location>
</feature>
<feature type="transmembrane region" description="Helical; Name=6" evidence="2">
    <location>
        <begin position="229"/>
        <end position="249"/>
    </location>
</feature>
<feature type="topological domain" description="Extracellular" evidence="2">
    <location>
        <begin position="250"/>
        <end position="264"/>
    </location>
</feature>
<feature type="transmembrane region" description="Helical; Name=7" evidence="2">
    <location>
        <begin position="265"/>
        <end position="285"/>
    </location>
</feature>
<feature type="topological domain" description="Cytoplasmic" evidence="2">
    <location>
        <begin position="286"/>
        <end position="330"/>
    </location>
</feature>
<gene>
    <name type="primary">MRGPRX2</name>
    <name type="synonym">MRGX2</name>
</gene>
<comment type="function">
    <text evidence="1">Mast cell-specific receptor for basic secretagogues, i.e. cationic amphiphilic drugs, as well as endo- or exogenous peptides, consisting of a basic head group and a hydrophobic core. Recognizes and binds small molecules containing a cyclized tetrahydroisoquinoline (THIQ), such as non-steroidal neuromuscular blocking drugs (NMBDs), including tubocurarine and atracurium. In response to these compounds, mediates pseudo-allergic reactions characterized by histamine release, inflammation and airway contraction.</text>
</comment>
<comment type="subcellular location">
    <subcellularLocation>
        <location evidence="2">Cell membrane</location>
        <topology evidence="2">Multi-pass membrane protein</topology>
    </subcellularLocation>
</comment>
<comment type="similarity">
    <text evidence="3">Belongs to the G-protein coupled receptor 1 family. Mas subfamily.</text>
</comment>
<accession>Q4QXU2</accession>
<protein>
    <recommendedName>
        <fullName>Mas-related G-protein coupled receptor member X2</fullName>
    </recommendedName>
</protein>
<reference key="1">
    <citation type="journal article" date="2005" name="Gene">
        <title>Adaptive evolution of MRGX2, a human sensory neuron specific gene involved in nociception.</title>
        <authorList>
            <person name="Yang S."/>
            <person name="Liu Y."/>
            <person name="Lin A.A."/>
            <person name="Cavalli-Sforza L.L."/>
            <person name="Zhao Z."/>
            <person name="Su B."/>
        </authorList>
    </citation>
    <scope>NUCLEOTIDE SEQUENCE [GENOMIC DNA]</scope>
</reference>